<gene>
    <name type="primary">frmA</name>
    <name type="ordered locus">SSON_0335</name>
</gene>
<keyword id="KW-0963">Cytoplasm</keyword>
<keyword id="KW-0479">Metal-binding</keyword>
<keyword id="KW-0520">NAD</keyword>
<keyword id="KW-0560">Oxidoreductase</keyword>
<keyword id="KW-1185">Reference proteome</keyword>
<keyword id="KW-0862">Zinc</keyword>
<comment type="function">
    <text evidence="2">Has high formaldehyde dehydrogenase activity in the presence of glutathione and catalyzes the oxidation of normal alcohols in a reaction that is not GSH-dependent. In addition, hemithiolacetals other than those formed from GSH, including omega-thiol fatty acids, also are substrates. Also acts as a S-nitroso-glutathione reductase by catalyzing the NADH-dependent reduction of S-nitrosoglutathione.</text>
</comment>
<comment type="catalytic activity">
    <reaction evidence="2">
        <text>S-(hydroxymethyl)glutathione + NADP(+) = S-formylglutathione + NADPH + H(+)</text>
        <dbReference type="Rhea" id="RHEA:19981"/>
        <dbReference type="ChEBI" id="CHEBI:15378"/>
        <dbReference type="ChEBI" id="CHEBI:57688"/>
        <dbReference type="ChEBI" id="CHEBI:57783"/>
        <dbReference type="ChEBI" id="CHEBI:58349"/>
        <dbReference type="ChEBI" id="CHEBI:58758"/>
        <dbReference type="EC" id="1.1.1.284"/>
    </reaction>
</comment>
<comment type="catalytic activity">
    <reaction evidence="2">
        <text>S-(hydroxymethyl)glutathione + NAD(+) = S-formylglutathione + NADH + H(+)</text>
        <dbReference type="Rhea" id="RHEA:19985"/>
        <dbReference type="ChEBI" id="CHEBI:15378"/>
        <dbReference type="ChEBI" id="CHEBI:57540"/>
        <dbReference type="ChEBI" id="CHEBI:57688"/>
        <dbReference type="ChEBI" id="CHEBI:57945"/>
        <dbReference type="ChEBI" id="CHEBI:58758"/>
        <dbReference type="EC" id="1.1.1.284"/>
    </reaction>
</comment>
<comment type="catalytic activity">
    <reaction evidence="2">
        <text>a primary alcohol + NAD(+) = an aldehyde + NADH + H(+)</text>
        <dbReference type="Rhea" id="RHEA:10736"/>
        <dbReference type="ChEBI" id="CHEBI:15378"/>
        <dbReference type="ChEBI" id="CHEBI:15734"/>
        <dbReference type="ChEBI" id="CHEBI:17478"/>
        <dbReference type="ChEBI" id="CHEBI:57540"/>
        <dbReference type="ChEBI" id="CHEBI:57945"/>
        <dbReference type="EC" id="1.1.1.1"/>
    </reaction>
</comment>
<comment type="catalytic activity">
    <reaction evidence="2">
        <text>a secondary alcohol + NAD(+) = a ketone + NADH + H(+)</text>
        <dbReference type="Rhea" id="RHEA:10740"/>
        <dbReference type="ChEBI" id="CHEBI:15378"/>
        <dbReference type="ChEBI" id="CHEBI:17087"/>
        <dbReference type="ChEBI" id="CHEBI:35681"/>
        <dbReference type="ChEBI" id="CHEBI:57540"/>
        <dbReference type="ChEBI" id="CHEBI:57945"/>
        <dbReference type="EC" id="1.1.1.1"/>
    </reaction>
</comment>
<comment type="catalytic activity">
    <reaction evidence="2">
        <text>S-nitrosoglutathione + NADH + H(+) = S-(hydroxysulfenamide)glutathione + NAD(+)</text>
        <dbReference type="Rhea" id="RHEA:78371"/>
        <dbReference type="ChEBI" id="CHEBI:15378"/>
        <dbReference type="ChEBI" id="CHEBI:57540"/>
        <dbReference type="ChEBI" id="CHEBI:57945"/>
        <dbReference type="ChEBI" id="CHEBI:145544"/>
        <dbReference type="ChEBI" id="CHEBI:229723"/>
    </reaction>
    <physiologicalReaction direction="left-to-right" evidence="2">
        <dbReference type="Rhea" id="RHEA:78372"/>
    </physiologicalReaction>
</comment>
<comment type="cofactor">
    <cofactor evidence="1">
        <name>Zn(2+)</name>
        <dbReference type="ChEBI" id="CHEBI:29105"/>
    </cofactor>
    <text evidence="1">Binds 2 Zn(2+) ions per subunit.</text>
</comment>
<comment type="subunit">
    <text evidence="2">Homodimer.</text>
</comment>
<comment type="subcellular location">
    <subcellularLocation>
        <location evidence="2">Cytoplasm</location>
    </subcellularLocation>
</comment>
<comment type="similarity">
    <text evidence="3">Belongs to the zinc-containing alcohol dehydrogenase family. Class-III subfamily.</text>
</comment>
<proteinExistence type="inferred from homology"/>
<name>FRMA_SHISS</name>
<feature type="chain" id="PRO_0000341292" description="S-(hydroxymethyl)glutathione dehydrogenase">
    <location>
        <begin position="1"/>
        <end position="369"/>
    </location>
</feature>
<feature type="binding site" evidence="1">
    <location>
        <position position="40"/>
    </location>
    <ligand>
        <name>Zn(2+)</name>
        <dbReference type="ChEBI" id="CHEBI:29105"/>
        <label>1</label>
        <note>catalytic</note>
    </ligand>
</feature>
<feature type="binding site" evidence="1">
    <location>
        <position position="62"/>
    </location>
    <ligand>
        <name>Zn(2+)</name>
        <dbReference type="ChEBI" id="CHEBI:29105"/>
        <label>1</label>
        <note>catalytic</note>
    </ligand>
</feature>
<feature type="binding site" evidence="1">
    <location>
        <position position="92"/>
    </location>
    <ligand>
        <name>Zn(2+)</name>
        <dbReference type="ChEBI" id="CHEBI:29105"/>
        <label>2</label>
    </ligand>
</feature>
<feature type="binding site" evidence="1">
    <location>
        <position position="95"/>
    </location>
    <ligand>
        <name>Zn(2+)</name>
        <dbReference type="ChEBI" id="CHEBI:29105"/>
        <label>2</label>
    </ligand>
</feature>
<feature type="binding site" evidence="1">
    <location>
        <position position="98"/>
    </location>
    <ligand>
        <name>Zn(2+)</name>
        <dbReference type="ChEBI" id="CHEBI:29105"/>
        <label>2</label>
    </ligand>
</feature>
<feature type="binding site" evidence="1">
    <location>
        <position position="106"/>
    </location>
    <ligand>
        <name>Zn(2+)</name>
        <dbReference type="ChEBI" id="CHEBI:29105"/>
        <label>2</label>
    </ligand>
</feature>
<feature type="binding site" evidence="1">
    <location>
        <position position="169"/>
    </location>
    <ligand>
        <name>Zn(2+)</name>
        <dbReference type="ChEBI" id="CHEBI:29105"/>
        <label>1</label>
        <note>catalytic</note>
    </ligand>
</feature>
<accession>Q3Z550</accession>
<reference key="1">
    <citation type="journal article" date="2005" name="Nucleic Acids Res.">
        <title>Genome dynamics and diversity of Shigella species, the etiologic agents of bacillary dysentery.</title>
        <authorList>
            <person name="Yang F."/>
            <person name="Yang J."/>
            <person name="Zhang X."/>
            <person name="Chen L."/>
            <person name="Jiang Y."/>
            <person name="Yan Y."/>
            <person name="Tang X."/>
            <person name="Wang J."/>
            <person name="Xiong Z."/>
            <person name="Dong J."/>
            <person name="Xue Y."/>
            <person name="Zhu Y."/>
            <person name="Xu X."/>
            <person name="Sun L."/>
            <person name="Chen S."/>
            <person name="Nie H."/>
            <person name="Peng J."/>
            <person name="Xu J."/>
            <person name="Wang Y."/>
            <person name="Yuan Z."/>
            <person name="Wen Y."/>
            <person name="Yao Z."/>
            <person name="Shen Y."/>
            <person name="Qiang B."/>
            <person name="Hou Y."/>
            <person name="Yu J."/>
            <person name="Jin Q."/>
        </authorList>
    </citation>
    <scope>NUCLEOTIDE SEQUENCE [LARGE SCALE GENOMIC DNA]</scope>
    <source>
        <strain>Ss046</strain>
    </source>
</reference>
<evidence type="ECO:0000250" key="1">
    <source>
        <dbReference type="UniProtKB" id="P11766"/>
    </source>
</evidence>
<evidence type="ECO:0000250" key="2">
    <source>
        <dbReference type="UniProtKB" id="P25437"/>
    </source>
</evidence>
<evidence type="ECO:0000305" key="3"/>
<sequence>MKSRAAVAFAPGKPLEIVEIDVAPPKKGEVLIKVTHTGVCHTDAFTLSGDDPEGVFPVVLGHEGAGVVVEVGEGVTSVKPGDHVIPLYTAECGECEFCRSGKTNLCVAVRETQGKGLMPDGTTRFSYNGQPLYHYMGCSTFSEYTVVAEVSLAKINPEANHEHVCLLGCGVTTGIGAVHNTAKVQPGDSVAVFGLGAIGLAVVQGARQAKAGRIIAIDTNPKKFDLARRFGATDCINPNDYDKPIKDVLLDINKWGIDHTFECIGNVNVMRAALESAHRGWGQSVIIGVAGSGQEISTRPFQLVTGRVWKGSAFGGVKGRSQLPGMVEDAMKGDIDLEPFVTHTMSLDEINDAFDLMHEGKSIRTVIRY</sequence>
<protein>
    <recommendedName>
        <fullName>S-(hydroxymethyl)glutathione dehydrogenase</fullName>
        <ecNumber>1.1.1.284</ecNumber>
    </recommendedName>
    <alternativeName>
        <fullName>Alcohol dehydrogenase class-3</fullName>
        <ecNumber>1.1.1.1</ecNumber>
    </alternativeName>
    <alternativeName>
        <fullName>Alcohol dehydrogenase class-III</fullName>
    </alternativeName>
    <alternativeName>
        <fullName>Glutathione-dependent formaldehyde dehydrogenase</fullName>
        <shortName>FALDH</shortName>
        <shortName>FDH</shortName>
        <shortName>GSH-FDH</shortName>
        <ecNumber>1.1.1.-</ecNumber>
    </alternativeName>
</protein>
<organism>
    <name type="scientific">Shigella sonnei (strain Ss046)</name>
    <dbReference type="NCBI Taxonomy" id="300269"/>
    <lineage>
        <taxon>Bacteria</taxon>
        <taxon>Pseudomonadati</taxon>
        <taxon>Pseudomonadota</taxon>
        <taxon>Gammaproteobacteria</taxon>
        <taxon>Enterobacterales</taxon>
        <taxon>Enterobacteriaceae</taxon>
        <taxon>Shigella</taxon>
    </lineage>
</organism>
<dbReference type="EC" id="1.1.1.284"/>
<dbReference type="EC" id="1.1.1.1"/>
<dbReference type="EC" id="1.1.1.-"/>
<dbReference type="EMBL" id="CP000038">
    <property type="protein sequence ID" value="AAZ87112.1"/>
    <property type="molecule type" value="Genomic_DNA"/>
</dbReference>
<dbReference type="RefSeq" id="WP_000842102.1">
    <property type="nucleotide sequence ID" value="NC_007384.1"/>
</dbReference>
<dbReference type="SMR" id="Q3Z550"/>
<dbReference type="GeneID" id="93777099"/>
<dbReference type="KEGG" id="ssn:SSON_0335"/>
<dbReference type="HOGENOM" id="CLU_026673_14_0_6"/>
<dbReference type="Proteomes" id="UP000002529">
    <property type="component" value="Chromosome"/>
</dbReference>
<dbReference type="GO" id="GO:0005829">
    <property type="term" value="C:cytosol"/>
    <property type="evidence" value="ECO:0007669"/>
    <property type="project" value="TreeGrafter"/>
</dbReference>
<dbReference type="GO" id="GO:0004022">
    <property type="term" value="F:alcohol dehydrogenase (NAD+) activity"/>
    <property type="evidence" value="ECO:0007669"/>
    <property type="project" value="UniProtKB-EC"/>
</dbReference>
<dbReference type="GO" id="GO:0106322">
    <property type="term" value="F:S-(hydroxymethyl)glutathione dehydrogenase (NAD+) activity"/>
    <property type="evidence" value="ECO:0007669"/>
    <property type="project" value="RHEA"/>
</dbReference>
<dbReference type="GO" id="GO:0106321">
    <property type="term" value="F:S-(hydroxymethyl)glutathione dehydrogenase (NADP+) activity"/>
    <property type="evidence" value="ECO:0007669"/>
    <property type="project" value="RHEA"/>
</dbReference>
<dbReference type="GO" id="GO:0080007">
    <property type="term" value="F:S-nitrosoglutathione reductase (NADH) activity"/>
    <property type="evidence" value="ECO:0007669"/>
    <property type="project" value="RHEA"/>
</dbReference>
<dbReference type="GO" id="GO:0008270">
    <property type="term" value="F:zinc ion binding"/>
    <property type="evidence" value="ECO:0007669"/>
    <property type="project" value="InterPro"/>
</dbReference>
<dbReference type="GO" id="GO:0046294">
    <property type="term" value="P:formaldehyde catabolic process"/>
    <property type="evidence" value="ECO:0007669"/>
    <property type="project" value="InterPro"/>
</dbReference>
<dbReference type="CDD" id="cd08300">
    <property type="entry name" value="alcohol_DH_class_III"/>
    <property type="match status" value="1"/>
</dbReference>
<dbReference type="FunFam" id="3.40.50.720:FF:000003">
    <property type="entry name" value="S-(hydroxymethyl)glutathione dehydrogenase"/>
    <property type="match status" value="1"/>
</dbReference>
<dbReference type="FunFam" id="3.90.180.10:FF:000001">
    <property type="entry name" value="S-(hydroxymethyl)glutathione dehydrogenase"/>
    <property type="match status" value="1"/>
</dbReference>
<dbReference type="Gene3D" id="3.90.180.10">
    <property type="entry name" value="Medium-chain alcohol dehydrogenases, catalytic domain"/>
    <property type="match status" value="1"/>
</dbReference>
<dbReference type="Gene3D" id="3.40.50.720">
    <property type="entry name" value="NAD(P)-binding Rossmann-like Domain"/>
    <property type="match status" value="1"/>
</dbReference>
<dbReference type="InterPro" id="IPR013149">
    <property type="entry name" value="ADH-like_C"/>
</dbReference>
<dbReference type="InterPro" id="IPR013154">
    <property type="entry name" value="ADH-like_N"/>
</dbReference>
<dbReference type="InterPro" id="IPR014183">
    <property type="entry name" value="ADH_3"/>
</dbReference>
<dbReference type="InterPro" id="IPR002328">
    <property type="entry name" value="ADH_Zn_CS"/>
</dbReference>
<dbReference type="InterPro" id="IPR011032">
    <property type="entry name" value="GroES-like_sf"/>
</dbReference>
<dbReference type="InterPro" id="IPR036291">
    <property type="entry name" value="NAD(P)-bd_dom_sf"/>
</dbReference>
<dbReference type="InterPro" id="IPR020843">
    <property type="entry name" value="PKS_ER"/>
</dbReference>
<dbReference type="NCBIfam" id="TIGR02818">
    <property type="entry name" value="adh_III_F_hyde"/>
    <property type="match status" value="1"/>
</dbReference>
<dbReference type="PANTHER" id="PTHR43880">
    <property type="entry name" value="ALCOHOL DEHYDROGENASE"/>
    <property type="match status" value="1"/>
</dbReference>
<dbReference type="PANTHER" id="PTHR43880:SF12">
    <property type="entry name" value="ALCOHOL DEHYDROGENASE CLASS-3"/>
    <property type="match status" value="1"/>
</dbReference>
<dbReference type="Pfam" id="PF08240">
    <property type="entry name" value="ADH_N"/>
    <property type="match status" value="1"/>
</dbReference>
<dbReference type="Pfam" id="PF00107">
    <property type="entry name" value="ADH_zinc_N"/>
    <property type="match status" value="1"/>
</dbReference>
<dbReference type="SMART" id="SM00829">
    <property type="entry name" value="PKS_ER"/>
    <property type="match status" value="1"/>
</dbReference>
<dbReference type="SUPFAM" id="SSF50129">
    <property type="entry name" value="GroES-like"/>
    <property type="match status" value="2"/>
</dbReference>
<dbReference type="SUPFAM" id="SSF51735">
    <property type="entry name" value="NAD(P)-binding Rossmann-fold domains"/>
    <property type="match status" value="1"/>
</dbReference>
<dbReference type="PROSITE" id="PS00059">
    <property type="entry name" value="ADH_ZINC"/>
    <property type="match status" value="1"/>
</dbReference>